<organism>
    <name type="scientific">Pyrococcus horikoshii (strain ATCC 700860 / DSM 12428 / JCM 9974 / NBRC 100139 / OT-3)</name>
    <dbReference type="NCBI Taxonomy" id="70601"/>
    <lineage>
        <taxon>Archaea</taxon>
        <taxon>Methanobacteriati</taxon>
        <taxon>Methanobacteriota</taxon>
        <taxon>Thermococci</taxon>
        <taxon>Thermococcales</taxon>
        <taxon>Thermococcaceae</taxon>
        <taxon>Pyrococcus</taxon>
    </lineage>
</organism>
<reference key="1">
    <citation type="journal article" date="1998" name="DNA Res.">
        <title>Complete sequence and gene organization of the genome of a hyper-thermophilic archaebacterium, Pyrococcus horikoshii OT3.</title>
        <authorList>
            <person name="Kawarabayasi Y."/>
            <person name="Sawada M."/>
            <person name="Horikawa H."/>
            <person name="Haikawa Y."/>
            <person name="Hino Y."/>
            <person name="Yamamoto S."/>
            <person name="Sekine M."/>
            <person name="Baba S."/>
            <person name="Kosugi H."/>
            <person name="Hosoyama A."/>
            <person name="Nagai Y."/>
            <person name="Sakai M."/>
            <person name="Ogura K."/>
            <person name="Otsuka R."/>
            <person name="Nakazawa H."/>
            <person name="Takamiya M."/>
            <person name="Ohfuku Y."/>
            <person name="Funahashi T."/>
            <person name="Tanaka T."/>
            <person name="Kudoh Y."/>
            <person name="Yamazaki J."/>
            <person name="Kushida N."/>
            <person name="Oguchi A."/>
            <person name="Aoki K."/>
            <person name="Yoshizawa T."/>
            <person name="Nakamura Y."/>
            <person name="Robb F.T."/>
            <person name="Horikoshi K."/>
            <person name="Masuchi Y."/>
            <person name="Shizuya H."/>
            <person name="Kikuchi H."/>
        </authorList>
    </citation>
    <scope>NUCLEOTIDE SEQUENCE [LARGE SCALE GENOMIC DNA]</scope>
    <source>
        <strain>ATCC 700860 / DSM 12428 / JCM 9974 / NBRC 100139 / OT-3</strain>
    </source>
</reference>
<feature type="chain" id="PRO_0000130012" description="Small ribosomal subunit protein uS19">
    <location>
        <begin position="1"/>
        <end position="132"/>
    </location>
</feature>
<evidence type="ECO:0000250" key="1"/>
<evidence type="ECO:0000305" key="2"/>
<keyword id="KW-0687">Ribonucleoprotein</keyword>
<keyword id="KW-0689">Ribosomal protein</keyword>
<keyword id="KW-0694">RNA-binding</keyword>
<keyword id="KW-0699">rRNA-binding</keyword>
<comment type="function">
    <text evidence="1">Protein S19 forms a complex with S13 that binds strongly to the 16S ribosomal RNA.</text>
</comment>
<comment type="similarity">
    <text evidence="2">Belongs to the universal ribosomal protein uS19 family.</text>
</comment>
<proteinExistence type="inferred from homology"/>
<name>RS19_PYRHO</name>
<accession>O59422</accession>
<gene>
    <name type="primary">rps19</name>
    <name type="ordered locus">PH1774</name>
</gene>
<protein>
    <recommendedName>
        <fullName evidence="2">Small ribosomal subunit protein uS19</fullName>
    </recommendedName>
    <alternativeName>
        <fullName>30S ribosomal protein S19</fullName>
    </alternativeName>
</protein>
<dbReference type="EMBL" id="BA000001">
    <property type="protein sequence ID" value="BAA30890.1"/>
    <property type="molecule type" value="Genomic_DNA"/>
</dbReference>
<dbReference type="PIR" id="C71187">
    <property type="entry name" value="C71187"/>
</dbReference>
<dbReference type="RefSeq" id="WP_010885837.1">
    <property type="nucleotide sequence ID" value="NC_000961.1"/>
</dbReference>
<dbReference type="SMR" id="O59422"/>
<dbReference type="STRING" id="70601.gene:9378773"/>
<dbReference type="EnsemblBacteria" id="BAA30890">
    <property type="protein sequence ID" value="BAA30890"/>
    <property type="gene ID" value="BAA30890"/>
</dbReference>
<dbReference type="GeneID" id="1442619"/>
<dbReference type="KEGG" id="pho:PH1774"/>
<dbReference type="eggNOG" id="arCOG04099">
    <property type="taxonomic scope" value="Archaea"/>
</dbReference>
<dbReference type="OrthoDB" id="30559at2157"/>
<dbReference type="Proteomes" id="UP000000752">
    <property type="component" value="Chromosome"/>
</dbReference>
<dbReference type="GO" id="GO:0022627">
    <property type="term" value="C:cytosolic small ribosomal subunit"/>
    <property type="evidence" value="ECO:0007669"/>
    <property type="project" value="TreeGrafter"/>
</dbReference>
<dbReference type="GO" id="GO:0019843">
    <property type="term" value="F:rRNA binding"/>
    <property type="evidence" value="ECO:0007669"/>
    <property type="project" value="UniProtKB-UniRule"/>
</dbReference>
<dbReference type="GO" id="GO:0003735">
    <property type="term" value="F:structural constituent of ribosome"/>
    <property type="evidence" value="ECO:0007669"/>
    <property type="project" value="InterPro"/>
</dbReference>
<dbReference type="GO" id="GO:0000028">
    <property type="term" value="P:ribosomal small subunit assembly"/>
    <property type="evidence" value="ECO:0007669"/>
    <property type="project" value="TreeGrafter"/>
</dbReference>
<dbReference type="GO" id="GO:0006412">
    <property type="term" value="P:translation"/>
    <property type="evidence" value="ECO:0007669"/>
    <property type="project" value="UniProtKB-UniRule"/>
</dbReference>
<dbReference type="FunFam" id="3.30.860.10:FF:000002">
    <property type="entry name" value="40S ribosomal protein S15"/>
    <property type="match status" value="1"/>
</dbReference>
<dbReference type="Gene3D" id="3.30.860.10">
    <property type="entry name" value="30s Ribosomal Protein S19, Chain A"/>
    <property type="match status" value="1"/>
</dbReference>
<dbReference type="HAMAP" id="MF_00531">
    <property type="entry name" value="Ribosomal_uS19"/>
    <property type="match status" value="1"/>
</dbReference>
<dbReference type="InterPro" id="IPR002222">
    <property type="entry name" value="Ribosomal_uS19"/>
</dbReference>
<dbReference type="InterPro" id="IPR020934">
    <property type="entry name" value="Ribosomal_uS19_CS"/>
</dbReference>
<dbReference type="InterPro" id="IPR005713">
    <property type="entry name" value="Ribosomal_uS19_euk/arc"/>
</dbReference>
<dbReference type="InterPro" id="IPR023575">
    <property type="entry name" value="Ribosomal_uS19_SF"/>
</dbReference>
<dbReference type="NCBIfam" id="NF003121">
    <property type="entry name" value="PRK04038.1"/>
    <property type="match status" value="1"/>
</dbReference>
<dbReference type="NCBIfam" id="TIGR01025">
    <property type="entry name" value="uS19_arch"/>
    <property type="match status" value="1"/>
</dbReference>
<dbReference type="PANTHER" id="PTHR11880">
    <property type="entry name" value="RIBOSOMAL PROTEIN S19P FAMILY MEMBER"/>
    <property type="match status" value="1"/>
</dbReference>
<dbReference type="PANTHER" id="PTHR11880:SF2">
    <property type="entry name" value="SMALL RIBOSOMAL SUBUNIT PROTEIN US19"/>
    <property type="match status" value="1"/>
</dbReference>
<dbReference type="Pfam" id="PF00203">
    <property type="entry name" value="Ribosomal_S19"/>
    <property type="match status" value="1"/>
</dbReference>
<dbReference type="PIRSF" id="PIRSF002144">
    <property type="entry name" value="Ribosomal_S19"/>
    <property type="match status" value="1"/>
</dbReference>
<dbReference type="PRINTS" id="PR00975">
    <property type="entry name" value="RIBOSOMALS19"/>
</dbReference>
<dbReference type="SUPFAM" id="SSF54570">
    <property type="entry name" value="Ribosomal protein S19"/>
    <property type="match status" value="1"/>
</dbReference>
<dbReference type="PROSITE" id="PS00323">
    <property type="entry name" value="RIBOSOMAL_S19"/>
    <property type="match status" value="1"/>
</dbReference>
<sequence>MARKEFRYRGYTLEQLMNMSLEELARLLPARQRRSLRRGLTPEQKKLLRKIRLAKKGKYNKPIRTHCRDMIILPEMVGLTIYVHNGKEFVPVEIKPEMIGHYLGEFAPTRKRVQHGAPGIGATRSSMFVAVK</sequence>